<feature type="signal peptide" evidence="2">
    <location>
        <begin position="1"/>
        <end position="20"/>
    </location>
</feature>
<feature type="chain" id="PRO_0000024466" description="Tyrosine-protein kinase Drl">
    <location>
        <begin position="21"/>
        <end position="610"/>
    </location>
</feature>
<feature type="topological domain" description="Extracellular" evidence="2">
    <location>
        <begin position="21"/>
        <end position="242"/>
    </location>
</feature>
<feature type="transmembrane region" description="Helical" evidence="2">
    <location>
        <begin position="243"/>
        <end position="263"/>
    </location>
</feature>
<feature type="topological domain" description="Cytoplasmic" evidence="2">
    <location>
        <begin position="264"/>
        <end position="610"/>
    </location>
</feature>
<feature type="domain" description="WIF" evidence="4 10">
    <location>
        <begin position="24"/>
        <end position="155"/>
    </location>
</feature>
<feature type="domain" description="Protein kinase" evidence="3">
    <location>
        <begin position="343"/>
        <end position="606"/>
    </location>
</feature>
<feature type="region of interest" description="Disordered" evidence="6">
    <location>
        <begin position="202"/>
        <end position="230"/>
    </location>
</feature>
<feature type="active site" description="Proton acceptor" evidence="3 5">
    <location>
        <position position="468"/>
    </location>
</feature>
<feature type="binding site" evidence="3">
    <location>
        <begin position="349"/>
        <end position="357"/>
    </location>
    <ligand>
        <name>ATP</name>
        <dbReference type="ChEBI" id="CHEBI:30616"/>
    </ligand>
</feature>
<feature type="binding site" evidence="3">
    <location>
        <position position="371"/>
    </location>
    <ligand>
        <name>ATP</name>
        <dbReference type="ChEBI" id="CHEBI:30616"/>
    </ligand>
</feature>
<feature type="modified residue" description="Phosphotyrosine; by autocatalysis" evidence="1">
    <location>
        <position position="498"/>
    </location>
</feature>
<feature type="glycosylation site" description="N-linked (GlcNAc...) asparagine" evidence="2">
    <location>
        <position position="63"/>
    </location>
</feature>
<feature type="glycosylation site" description="N-linked (GlcNAc...) asparagine" evidence="2">
    <location>
        <position position="99"/>
    </location>
</feature>
<feature type="glycosylation site" description="N-linked (GlcNAc...) asparagine" evidence="2">
    <location>
        <position position="143"/>
    </location>
</feature>
<keyword id="KW-0067">ATP-binding</keyword>
<keyword id="KW-1003">Cell membrane</keyword>
<keyword id="KW-0217">Developmental protein</keyword>
<keyword id="KW-0325">Glycoprotein</keyword>
<keyword id="KW-0418">Kinase</keyword>
<keyword id="KW-0472">Membrane</keyword>
<keyword id="KW-0547">Nucleotide-binding</keyword>
<keyword id="KW-0597">Phosphoprotein</keyword>
<keyword id="KW-0675">Receptor</keyword>
<keyword id="KW-1185">Reference proteome</keyword>
<keyword id="KW-0732">Signal</keyword>
<keyword id="KW-0808">Transferase</keyword>
<keyword id="KW-0812">Transmembrane</keyword>
<keyword id="KW-1133">Transmembrane helix</keyword>
<keyword id="KW-0829">Tyrosine-protein kinase</keyword>
<keyword id="KW-0879">Wnt signaling pathway</keyword>
<gene>
    <name type="primary">drl</name>
    <name type="synonym">lio</name>
    <name type="ORF">CG17348</name>
</gene>
<name>RYK1_DROME</name>
<dbReference type="EC" id="2.7.10.1"/>
<dbReference type="EMBL" id="U36584">
    <property type="protein sequence ID" value="AAA79949.1"/>
    <property type="molecule type" value="mRNA"/>
</dbReference>
<dbReference type="EMBL" id="L47260">
    <property type="protein sequence ID" value="AAA75347.1"/>
    <property type="molecule type" value="mRNA"/>
</dbReference>
<dbReference type="EMBL" id="AE014134">
    <property type="protein sequence ID" value="AAF53776.1"/>
    <property type="molecule type" value="Genomic_DNA"/>
</dbReference>
<dbReference type="EMBL" id="AY051852">
    <property type="protein sequence ID" value="AAK93276.1"/>
    <property type="molecule type" value="mRNA"/>
</dbReference>
<dbReference type="EMBL" id="AF147883">
    <property type="protein sequence ID" value="AAD41343.1"/>
    <property type="molecule type" value="Genomic_DNA"/>
</dbReference>
<dbReference type="PIR" id="S58885">
    <property type="entry name" value="S58885"/>
</dbReference>
<dbReference type="RefSeq" id="NP_477139.1">
    <property type="nucleotide sequence ID" value="NM_057791.4"/>
</dbReference>
<dbReference type="SMR" id="Q27324"/>
<dbReference type="BioGRID" id="69001">
    <property type="interactions" value="17"/>
</dbReference>
<dbReference type="DIP" id="DIP-22284N"/>
<dbReference type="FunCoup" id="Q27324">
    <property type="interactions" value="318"/>
</dbReference>
<dbReference type="IntAct" id="Q27324">
    <property type="interactions" value="3"/>
</dbReference>
<dbReference type="STRING" id="7227.FBpp0303242"/>
<dbReference type="GlyCosmos" id="Q27324">
    <property type="glycosylation" value="3 sites, No reported glycans"/>
</dbReference>
<dbReference type="GlyGen" id="Q27324">
    <property type="glycosylation" value="3 sites"/>
</dbReference>
<dbReference type="PaxDb" id="7227-FBpp0080736"/>
<dbReference type="DNASU" id="44355"/>
<dbReference type="EnsemblMetazoa" id="FBtr0081195">
    <property type="protein sequence ID" value="FBpp0080736"/>
    <property type="gene ID" value="FBgn0015380"/>
</dbReference>
<dbReference type="GeneID" id="44355"/>
<dbReference type="KEGG" id="dme:Dmel_CG17348"/>
<dbReference type="UCSC" id="CG17348-RA">
    <property type="organism name" value="d. melanogaster"/>
</dbReference>
<dbReference type="AGR" id="FB:FBgn0015380"/>
<dbReference type="CTD" id="30167"/>
<dbReference type="FlyBase" id="FBgn0015380">
    <property type="gene designation" value="drl"/>
</dbReference>
<dbReference type="VEuPathDB" id="VectorBase:FBgn0015380"/>
<dbReference type="eggNOG" id="KOG1024">
    <property type="taxonomic scope" value="Eukaryota"/>
</dbReference>
<dbReference type="GeneTree" id="ENSGT00940000172861"/>
<dbReference type="HOGENOM" id="CLU_000288_7_36_1"/>
<dbReference type="InParanoid" id="Q27324"/>
<dbReference type="OMA" id="LYEATHP"/>
<dbReference type="OrthoDB" id="535945at2759"/>
<dbReference type="PhylomeDB" id="Q27324"/>
<dbReference type="BRENDA" id="2.7.10.1">
    <property type="organism ID" value="1994"/>
</dbReference>
<dbReference type="SignaLink" id="Q27324"/>
<dbReference type="BioGRID-ORCS" id="44355">
    <property type="hits" value="0 hits in 3 CRISPR screens"/>
</dbReference>
<dbReference type="GenomeRNAi" id="44355"/>
<dbReference type="PRO" id="PR:Q27324"/>
<dbReference type="Proteomes" id="UP000000803">
    <property type="component" value="Chromosome 2L"/>
</dbReference>
<dbReference type="Bgee" id="FBgn0015380">
    <property type="expression patterns" value="Expressed in eye disc (Drosophila) and 132 other cell types or tissues"/>
</dbReference>
<dbReference type="ExpressionAtlas" id="Q27324">
    <property type="expression patterns" value="baseline and differential"/>
</dbReference>
<dbReference type="GO" id="GO:0030424">
    <property type="term" value="C:axon"/>
    <property type="evidence" value="ECO:0000314"/>
    <property type="project" value="FlyBase"/>
</dbReference>
<dbReference type="GO" id="GO:0030425">
    <property type="term" value="C:dendrite"/>
    <property type="evidence" value="ECO:0000314"/>
    <property type="project" value="FlyBase"/>
</dbReference>
<dbReference type="GO" id="GO:0005886">
    <property type="term" value="C:plasma membrane"/>
    <property type="evidence" value="ECO:0000314"/>
    <property type="project" value="FlyBase"/>
</dbReference>
<dbReference type="GO" id="GO:0043235">
    <property type="term" value="C:receptor complex"/>
    <property type="evidence" value="ECO:0000314"/>
    <property type="project" value="FlyBase"/>
</dbReference>
<dbReference type="GO" id="GO:0005524">
    <property type="term" value="F:ATP binding"/>
    <property type="evidence" value="ECO:0007669"/>
    <property type="project" value="UniProtKB-KW"/>
</dbReference>
<dbReference type="GO" id="GO:0046982">
    <property type="term" value="F:protein heterodimerization activity"/>
    <property type="evidence" value="ECO:0000353"/>
    <property type="project" value="FlyBase"/>
</dbReference>
<dbReference type="GO" id="GO:0042803">
    <property type="term" value="F:protein homodimerization activity"/>
    <property type="evidence" value="ECO:0000353"/>
    <property type="project" value="FlyBase"/>
</dbReference>
<dbReference type="GO" id="GO:0019901">
    <property type="term" value="F:protein kinase binding"/>
    <property type="evidence" value="ECO:0000353"/>
    <property type="project" value="FlyBase"/>
</dbReference>
<dbReference type="GO" id="GO:0016740">
    <property type="term" value="F:transferase activity"/>
    <property type="evidence" value="ECO:0007669"/>
    <property type="project" value="UniProtKB-KW"/>
</dbReference>
<dbReference type="GO" id="GO:0042813">
    <property type="term" value="F:Wnt receptor activity"/>
    <property type="evidence" value="ECO:0000314"/>
    <property type="project" value="FlyBase"/>
</dbReference>
<dbReference type="GO" id="GO:0017147">
    <property type="term" value="F:Wnt-protein binding"/>
    <property type="evidence" value="ECO:0000353"/>
    <property type="project" value="FlyBase"/>
</dbReference>
<dbReference type="GO" id="GO:0007411">
    <property type="term" value="P:axon guidance"/>
    <property type="evidence" value="ECO:0000315"/>
    <property type="project" value="UniProtKB"/>
</dbReference>
<dbReference type="GO" id="GO:0016199">
    <property type="term" value="P:axon midline choice point recognition"/>
    <property type="evidence" value="ECO:0000315"/>
    <property type="project" value="FlyBase"/>
</dbReference>
<dbReference type="GO" id="GO:0007409">
    <property type="term" value="P:axonogenesis"/>
    <property type="evidence" value="ECO:0000318"/>
    <property type="project" value="GO_Central"/>
</dbReference>
<dbReference type="GO" id="GO:0060070">
    <property type="term" value="P:canonical Wnt signaling pathway"/>
    <property type="evidence" value="ECO:0000304"/>
    <property type="project" value="ParkinsonsUK-UCL"/>
</dbReference>
<dbReference type="GO" id="GO:0007169">
    <property type="term" value="P:cell surface receptor protein tyrosine kinase signaling pathway"/>
    <property type="evidence" value="ECO:0000318"/>
    <property type="project" value="GO_Central"/>
</dbReference>
<dbReference type="GO" id="GO:0061643">
    <property type="term" value="P:chemorepulsion of axon"/>
    <property type="evidence" value="ECO:0000315"/>
    <property type="project" value="FlyBase"/>
</dbReference>
<dbReference type="GO" id="GO:0070983">
    <property type="term" value="P:dendrite guidance"/>
    <property type="evidence" value="ECO:0000315"/>
    <property type="project" value="FlyBase"/>
</dbReference>
<dbReference type="GO" id="GO:0016204">
    <property type="term" value="P:determination of muscle attachment site"/>
    <property type="evidence" value="ECO:0000315"/>
    <property type="project" value="FlyBase"/>
</dbReference>
<dbReference type="GO" id="GO:0007482">
    <property type="term" value="P:haltere development"/>
    <property type="evidence" value="ECO:0000316"/>
    <property type="project" value="FlyBase"/>
</dbReference>
<dbReference type="GO" id="GO:0007611">
    <property type="term" value="P:learning or memory"/>
    <property type="evidence" value="ECO:0000315"/>
    <property type="project" value="UniProtKB"/>
</dbReference>
<dbReference type="GO" id="GO:0007613">
    <property type="term" value="P:memory"/>
    <property type="evidence" value="ECO:0000315"/>
    <property type="project" value="FlyBase"/>
</dbReference>
<dbReference type="GO" id="GO:0016203">
    <property type="term" value="P:muscle attachment"/>
    <property type="evidence" value="ECO:0000315"/>
    <property type="project" value="UniProtKB"/>
</dbReference>
<dbReference type="GO" id="GO:0016319">
    <property type="term" value="P:mushroom body development"/>
    <property type="evidence" value="ECO:0000304"/>
    <property type="project" value="ParkinsonsUK-UCL"/>
</dbReference>
<dbReference type="GO" id="GO:0008355">
    <property type="term" value="P:olfactory learning"/>
    <property type="evidence" value="ECO:0000315"/>
    <property type="project" value="FlyBase"/>
</dbReference>
<dbReference type="GO" id="GO:0010976">
    <property type="term" value="P:positive regulation of neuron projection development"/>
    <property type="evidence" value="ECO:0000318"/>
    <property type="project" value="GO_Central"/>
</dbReference>
<dbReference type="GO" id="GO:0051897">
    <property type="term" value="P:positive regulation of phosphatidylinositol 3-kinase/protein kinase B signal transduction"/>
    <property type="evidence" value="ECO:0000318"/>
    <property type="project" value="GO_Central"/>
</dbReference>
<dbReference type="GO" id="GO:0007435">
    <property type="term" value="P:salivary gland morphogenesis"/>
    <property type="evidence" value="ECO:0000315"/>
    <property type="project" value="FlyBase"/>
</dbReference>
<dbReference type="GO" id="GO:0007165">
    <property type="term" value="P:signal transduction"/>
    <property type="evidence" value="ECO:0000315"/>
    <property type="project" value="UniProtKB"/>
</dbReference>
<dbReference type="GO" id="GO:0007416">
    <property type="term" value="P:synapse assembly"/>
    <property type="evidence" value="ECO:0000304"/>
    <property type="project" value="ParkinsonsUK-UCL"/>
</dbReference>
<dbReference type="CDD" id="cd05043">
    <property type="entry name" value="PTK_Ryk"/>
    <property type="match status" value="1"/>
</dbReference>
<dbReference type="FunFam" id="3.30.200.20:FF:000502">
    <property type="entry name" value="Tyrosine-protein kinase Drl"/>
    <property type="match status" value="1"/>
</dbReference>
<dbReference type="FunFam" id="2.60.40.2170:FF:000005">
    <property type="entry name" value="tyrosine-protein kinase Drl"/>
    <property type="match status" value="1"/>
</dbReference>
<dbReference type="FunFam" id="1.10.510.10:FF:000165">
    <property type="entry name" value="Tyrosine-protein kinase RYK"/>
    <property type="match status" value="1"/>
</dbReference>
<dbReference type="Gene3D" id="3.30.200.20">
    <property type="entry name" value="Phosphorylase Kinase, domain 1"/>
    <property type="match status" value="1"/>
</dbReference>
<dbReference type="Gene3D" id="1.10.510.10">
    <property type="entry name" value="Transferase(Phosphotransferase) domain 1"/>
    <property type="match status" value="1"/>
</dbReference>
<dbReference type="Gene3D" id="2.60.40.2170">
    <property type="entry name" value="Wnt, WIF domain"/>
    <property type="match status" value="1"/>
</dbReference>
<dbReference type="InterPro" id="IPR011009">
    <property type="entry name" value="Kinase-like_dom_sf"/>
</dbReference>
<dbReference type="InterPro" id="IPR000719">
    <property type="entry name" value="Prot_kinase_dom"/>
</dbReference>
<dbReference type="InterPro" id="IPR050122">
    <property type="entry name" value="RTK"/>
</dbReference>
<dbReference type="InterPro" id="IPR001245">
    <property type="entry name" value="Ser-Thr/Tyr_kinase_cat_dom"/>
</dbReference>
<dbReference type="InterPro" id="IPR008266">
    <property type="entry name" value="Tyr_kinase_AS"/>
</dbReference>
<dbReference type="InterPro" id="IPR003306">
    <property type="entry name" value="WIF"/>
</dbReference>
<dbReference type="InterPro" id="IPR038677">
    <property type="entry name" value="WIF_sf"/>
</dbReference>
<dbReference type="PANTHER" id="PTHR24416">
    <property type="entry name" value="TYROSINE-PROTEIN KINASE RECEPTOR"/>
    <property type="match status" value="1"/>
</dbReference>
<dbReference type="PANTHER" id="PTHR24416:SF349">
    <property type="entry name" value="TYROSINE-PROTEIN KINASE RYK"/>
    <property type="match status" value="1"/>
</dbReference>
<dbReference type="Pfam" id="PF07714">
    <property type="entry name" value="PK_Tyr_Ser-Thr"/>
    <property type="match status" value="1"/>
</dbReference>
<dbReference type="Pfam" id="PF02019">
    <property type="entry name" value="WIF"/>
    <property type="match status" value="1"/>
</dbReference>
<dbReference type="PRINTS" id="PR00109">
    <property type="entry name" value="TYRKINASE"/>
</dbReference>
<dbReference type="SMART" id="SM00469">
    <property type="entry name" value="WIF"/>
    <property type="match status" value="1"/>
</dbReference>
<dbReference type="SUPFAM" id="SSF56112">
    <property type="entry name" value="Protein kinase-like (PK-like)"/>
    <property type="match status" value="1"/>
</dbReference>
<dbReference type="PROSITE" id="PS50011">
    <property type="entry name" value="PROTEIN_KINASE_DOM"/>
    <property type="match status" value="1"/>
</dbReference>
<dbReference type="PROSITE" id="PS00109">
    <property type="entry name" value="PROTEIN_KINASE_TYR"/>
    <property type="match status" value="1"/>
</dbReference>
<dbReference type="PROSITE" id="PS50814">
    <property type="entry name" value="WIF"/>
    <property type="match status" value="1"/>
</dbReference>
<accession>Q27324</accession>
<accession>Q9U9Y3</accession>
<accession>Q9VIY6</accession>
<proteinExistence type="evidence at transcript level"/>
<comment type="function">
    <text evidence="7 8 9">Probable coreceptor of Wnt proteins. Involved in neuronal pathway recognition and ventral muscle attachment site selection. Non-vital for development. May be part of a signal transduction cascade involved in learning and possibly memory.</text>
</comment>
<comment type="catalytic activity">
    <reaction evidence="5">
        <text>L-tyrosyl-[protein] + ATP = O-phospho-L-tyrosyl-[protein] + ADP + H(+)</text>
        <dbReference type="Rhea" id="RHEA:10596"/>
        <dbReference type="Rhea" id="RHEA-COMP:10136"/>
        <dbReference type="Rhea" id="RHEA-COMP:20101"/>
        <dbReference type="ChEBI" id="CHEBI:15378"/>
        <dbReference type="ChEBI" id="CHEBI:30616"/>
        <dbReference type="ChEBI" id="CHEBI:46858"/>
        <dbReference type="ChEBI" id="CHEBI:61978"/>
        <dbReference type="ChEBI" id="CHEBI:456216"/>
        <dbReference type="EC" id="2.7.10.1"/>
    </reaction>
</comment>
<comment type="subcellular location">
    <subcellularLocation>
        <location evidence="10">Cell membrane</location>
        <topology evidence="10">Single-pass membrane protein</topology>
    </subcellularLocation>
</comment>
<comment type="tissue specificity">
    <text evidence="7 9">In the embryonic abdominal hemisegment, expression is restricted to cell body, axon and growth cone of a cluster of 20 ventral nerve cord interneurons. During muscle growth and attachment events in the embryonic abdominal hemisegment, expression is in somatic muscle fibers 21-23 at 10-13 hours and 2 patches of approximately 15 neighboring epidermal cells (dorsal and ventral attachment sites) at 6-13 hours.</text>
</comment>
<comment type="domain">
    <text evidence="1">The extracellular WIF domain is responsible for Wnt binding.</text>
</comment>
<comment type="similarity">
    <text evidence="3">Belongs to the protein kinase superfamily. Tyr protein kinase family.</text>
</comment>
<evidence type="ECO:0000250" key="1"/>
<evidence type="ECO:0000255" key="2"/>
<evidence type="ECO:0000255" key="3">
    <source>
        <dbReference type="PROSITE-ProRule" id="PRU00159"/>
    </source>
</evidence>
<evidence type="ECO:0000255" key="4">
    <source>
        <dbReference type="PROSITE-ProRule" id="PRU00222"/>
    </source>
</evidence>
<evidence type="ECO:0000255" key="5">
    <source>
        <dbReference type="PROSITE-ProRule" id="PRU10028"/>
    </source>
</evidence>
<evidence type="ECO:0000256" key="6">
    <source>
        <dbReference type="SAM" id="MobiDB-lite"/>
    </source>
</evidence>
<evidence type="ECO:0000269" key="7">
    <source>
    </source>
</evidence>
<evidence type="ECO:0000269" key="8">
    <source>
    </source>
</evidence>
<evidence type="ECO:0000269" key="9">
    <source>
    </source>
</evidence>
<evidence type="ECO:0000305" key="10"/>
<protein>
    <recommendedName>
        <fullName>Tyrosine-protein kinase Drl</fullName>
        <ecNumber>2.7.10.1</ecNumber>
    </recommendedName>
    <alternativeName>
        <fullName>Protein derailed</fullName>
    </alternativeName>
</protein>
<reference evidence="10" key="1">
    <citation type="journal article" date="1995" name="FEBS Lett.">
        <title>The Drosophila learning and memory gene linotte encodes a putative receptor tyrosine kinase homologous to the human RYK gene product.</title>
        <authorList>
            <person name="Dura J.-M."/>
            <person name="Taillebourg E."/>
            <person name="Preat T."/>
        </authorList>
    </citation>
    <scope>NUCLEOTIDE SEQUENCE [MRNA]</scope>
    <scope>FUNCTION</scope>
    <source>
        <tissue>Head</tissue>
    </source>
</reference>
<reference evidence="10" key="2">
    <citation type="journal article" date="1995" name="Nature">
        <title>Control of neuronal pathway selection by a Drosophila receptor protein-tyrosine kinase family member.</title>
        <authorList>
            <person name="Callahan C.A."/>
            <person name="Muralidhar M.G."/>
            <person name="Lundgren S.E."/>
            <person name="Scully A.L."/>
            <person name="Thomas J.B."/>
        </authorList>
    </citation>
    <scope>NUCLEOTIDE SEQUENCE [MRNA]</scope>
    <scope>FUNCTION</scope>
    <scope>TISSUE SPECIFICITY</scope>
    <source>
        <tissue>Embryo</tissue>
    </source>
</reference>
<reference evidence="10" key="3">
    <citation type="journal article" date="2000" name="Science">
        <title>The genome sequence of Drosophila melanogaster.</title>
        <authorList>
            <person name="Adams M.D."/>
            <person name="Celniker S.E."/>
            <person name="Holt R.A."/>
            <person name="Evans C.A."/>
            <person name="Gocayne J.D."/>
            <person name="Amanatides P.G."/>
            <person name="Scherer S.E."/>
            <person name="Li P.W."/>
            <person name="Hoskins R.A."/>
            <person name="Galle R.F."/>
            <person name="George R.A."/>
            <person name="Lewis S.E."/>
            <person name="Richards S."/>
            <person name="Ashburner M."/>
            <person name="Henderson S.N."/>
            <person name="Sutton G.G."/>
            <person name="Wortman J.R."/>
            <person name="Yandell M.D."/>
            <person name="Zhang Q."/>
            <person name="Chen L.X."/>
            <person name="Brandon R.C."/>
            <person name="Rogers Y.-H.C."/>
            <person name="Blazej R.G."/>
            <person name="Champe M."/>
            <person name="Pfeiffer B.D."/>
            <person name="Wan K.H."/>
            <person name="Doyle C."/>
            <person name="Baxter E.G."/>
            <person name="Helt G."/>
            <person name="Nelson C.R."/>
            <person name="Miklos G.L.G."/>
            <person name="Abril J.F."/>
            <person name="Agbayani A."/>
            <person name="An H.-J."/>
            <person name="Andrews-Pfannkoch C."/>
            <person name="Baldwin D."/>
            <person name="Ballew R.M."/>
            <person name="Basu A."/>
            <person name="Baxendale J."/>
            <person name="Bayraktaroglu L."/>
            <person name="Beasley E.M."/>
            <person name="Beeson K.Y."/>
            <person name="Benos P.V."/>
            <person name="Berman B.P."/>
            <person name="Bhandari D."/>
            <person name="Bolshakov S."/>
            <person name="Borkova D."/>
            <person name="Botchan M.R."/>
            <person name="Bouck J."/>
            <person name="Brokstein P."/>
            <person name="Brottier P."/>
            <person name="Burtis K.C."/>
            <person name="Busam D.A."/>
            <person name="Butler H."/>
            <person name="Cadieu E."/>
            <person name="Center A."/>
            <person name="Chandra I."/>
            <person name="Cherry J.M."/>
            <person name="Cawley S."/>
            <person name="Dahlke C."/>
            <person name="Davenport L.B."/>
            <person name="Davies P."/>
            <person name="de Pablos B."/>
            <person name="Delcher A."/>
            <person name="Deng Z."/>
            <person name="Mays A.D."/>
            <person name="Dew I."/>
            <person name="Dietz S.M."/>
            <person name="Dodson K."/>
            <person name="Doup L.E."/>
            <person name="Downes M."/>
            <person name="Dugan-Rocha S."/>
            <person name="Dunkov B.C."/>
            <person name="Dunn P."/>
            <person name="Durbin K.J."/>
            <person name="Evangelista C.C."/>
            <person name="Ferraz C."/>
            <person name="Ferriera S."/>
            <person name="Fleischmann W."/>
            <person name="Fosler C."/>
            <person name="Gabrielian A.E."/>
            <person name="Garg N.S."/>
            <person name="Gelbart W.M."/>
            <person name="Glasser K."/>
            <person name="Glodek A."/>
            <person name="Gong F."/>
            <person name="Gorrell J.H."/>
            <person name="Gu Z."/>
            <person name="Guan P."/>
            <person name="Harris M."/>
            <person name="Harris N.L."/>
            <person name="Harvey D.A."/>
            <person name="Heiman T.J."/>
            <person name="Hernandez J.R."/>
            <person name="Houck J."/>
            <person name="Hostin D."/>
            <person name="Houston K.A."/>
            <person name="Howland T.J."/>
            <person name="Wei M.-H."/>
            <person name="Ibegwam C."/>
            <person name="Jalali M."/>
            <person name="Kalush F."/>
            <person name="Karpen G.H."/>
            <person name="Ke Z."/>
            <person name="Kennison J.A."/>
            <person name="Ketchum K.A."/>
            <person name="Kimmel B.E."/>
            <person name="Kodira C.D."/>
            <person name="Kraft C.L."/>
            <person name="Kravitz S."/>
            <person name="Kulp D."/>
            <person name="Lai Z."/>
            <person name="Lasko P."/>
            <person name="Lei Y."/>
            <person name="Levitsky A.A."/>
            <person name="Li J.H."/>
            <person name="Li Z."/>
            <person name="Liang Y."/>
            <person name="Lin X."/>
            <person name="Liu X."/>
            <person name="Mattei B."/>
            <person name="McIntosh T.C."/>
            <person name="McLeod M.P."/>
            <person name="McPherson D."/>
            <person name="Merkulov G."/>
            <person name="Milshina N.V."/>
            <person name="Mobarry C."/>
            <person name="Morris J."/>
            <person name="Moshrefi A."/>
            <person name="Mount S.M."/>
            <person name="Moy M."/>
            <person name="Murphy B."/>
            <person name="Murphy L."/>
            <person name="Muzny D.M."/>
            <person name="Nelson D.L."/>
            <person name="Nelson D.R."/>
            <person name="Nelson K.A."/>
            <person name="Nixon K."/>
            <person name="Nusskern D.R."/>
            <person name="Pacleb J.M."/>
            <person name="Palazzolo M."/>
            <person name="Pittman G.S."/>
            <person name="Pan S."/>
            <person name="Pollard J."/>
            <person name="Puri V."/>
            <person name="Reese M.G."/>
            <person name="Reinert K."/>
            <person name="Remington K."/>
            <person name="Saunders R.D.C."/>
            <person name="Scheeler F."/>
            <person name="Shen H."/>
            <person name="Shue B.C."/>
            <person name="Siden-Kiamos I."/>
            <person name="Simpson M."/>
            <person name="Skupski M.P."/>
            <person name="Smith T.J."/>
            <person name="Spier E."/>
            <person name="Spradling A.C."/>
            <person name="Stapleton M."/>
            <person name="Strong R."/>
            <person name="Sun E."/>
            <person name="Svirskas R."/>
            <person name="Tector C."/>
            <person name="Turner R."/>
            <person name="Venter E."/>
            <person name="Wang A.H."/>
            <person name="Wang X."/>
            <person name="Wang Z.-Y."/>
            <person name="Wassarman D.A."/>
            <person name="Weinstock G.M."/>
            <person name="Weissenbach J."/>
            <person name="Williams S.M."/>
            <person name="Woodage T."/>
            <person name="Worley K.C."/>
            <person name="Wu D."/>
            <person name="Yang S."/>
            <person name="Yao Q.A."/>
            <person name="Ye J."/>
            <person name="Yeh R.-F."/>
            <person name="Zaveri J.S."/>
            <person name="Zhan M."/>
            <person name="Zhang G."/>
            <person name="Zhao Q."/>
            <person name="Zheng L."/>
            <person name="Zheng X.H."/>
            <person name="Zhong F.N."/>
            <person name="Zhong W."/>
            <person name="Zhou X."/>
            <person name="Zhu S.C."/>
            <person name="Zhu X."/>
            <person name="Smith H.O."/>
            <person name="Gibbs R.A."/>
            <person name="Myers E.W."/>
            <person name="Rubin G.M."/>
            <person name="Venter J.C."/>
        </authorList>
    </citation>
    <scope>NUCLEOTIDE SEQUENCE [LARGE SCALE GENOMIC DNA]</scope>
    <source>
        <strain>Berkeley</strain>
    </source>
</reference>
<reference key="4">
    <citation type="journal article" date="2002" name="Genome Biol.">
        <title>Annotation of the Drosophila melanogaster euchromatic genome: a systematic review.</title>
        <authorList>
            <person name="Misra S."/>
            <person name="Crosby M.A."/>
            <person name="Mungall C.J."/>
            <person name="Matthews B.B."/>
            <person name="Campbell K.S."/>
            <person name="Hradecky P."/>
            <person name="Huang Y."/>
            <person name="Kaminker J.S."/>
            <person name="Millburn G.H."/>
            <person name="Prochnik S.E."/>
            <person name="Smith C.D."/>
            <person name="Tupy J.L."/>
            <person name="Whitfield E.J."/>
            <person name="Bayraktaroglu L."/>
            <person name="Berman B.P."/>
            <person name="Bettencourt B.R."/>
            <person name="Celniker S.E."/>
            <person name="de Grey A.D.N.J."/>
            <person name="Drysdale R.A."/>
            <person name="Harris N.L."/>
            <person name="Richter J."/>
            <person name="Russo S."/>
            <person name="Schroeder A.J."/>
            <person name="Shu S.Q."/>
            <person name="Stapleton M."/>
            <person name="Yamada C."/>
            <person name="Ashburner M."/>
            <person name="Gelbart W.M."/>
            <person name="Rubin G.M."/>
            <person name="Lewis S.E."/>
        </authorList>
    </citation>
    <scope>GENOME REANNOTATION</scope>
    <source>
        <strain>Berkeley</strain>
    </source>
</reference>
<reference key="5">
    <citation type="journal article" date="2002" name="Genome Biol.">
        <title>A Drosophila full-length cDNA resource.</title>
        <authorList>
            <person name="Stapleton M."/>
            <person name="Carlson J.W."/>
            <person name="Brokstein P."/>
            <person name="Yu C."/>
            <person name="Champe M."/>
            <person name="George R.A."/>
            <person name="Guarin H."/>
            <person name="Kronmiller B."/>
            <person name="Pacleb J.M."/>
            <person name="Park S."/>
            <person name="Wan K.H."/>
            <person name="Rubin G.M."/>
            <person name="Celniker S.E."/>
        </authorList>
    </citation>
    <scope>NUCLEOTIDE SEQUENCE [LARGE SCALE MRNA]</scope>
    <source>
        <strain>Berkeley</strain>
        <tissue>Embryo</tissue>
    </source>
</reference>
<reference evidence="10" key="6">
    <citation type="journal article" date="1999" name="Proc. Natl. Acad. Sci. U.S.A.">
        <title>A novel mechanism for P element homing in Drosophila.</title>
        <authorList>
            <person name="Taillebourg E."/>
            <person name="Dura J.-M."/>
        </authorList>
    </citation>
    <scope>NUCLEOTIDE SEQUENCE [GENOMIC DNA] OF 1-36</scope>
</reference>
<reference evidence="10" key="7">
    <citation type="journal article" date="1996" name="Development">
        <title>derailed is required for muscle attachment site selection in Drosophila.</title>
        <authorList>
            <person name="Callahan C.A."/>
            <person name="Bonkovsky J.L."/>
            <person name="Scully A.L."/>
            <person name="Thomas J.B."/>
        </authorList>
    </citation>
    <scope>FUNCTION</scope>
    <scope>TISSUE SPECIFICITY</scope>
</reference>
<organism>
    <name type="scientific">Drosophila melanogaster</name>
    <name type="common">Fruit fly</name>
    <dbReference type="NCBI Taxonomy" id="7227"/>
    <lineage>
        <taxon>Eukaryota</taxon>
        <taxon>Metazoa</taxon>
        <taxon>Ecdysozoa</taxon>
        <taxon>Arthropoda</taxon>
        <taxon>Hexapoda</taxon>
        <taxon>Insecta</taxon>
        <taxon>Pterygota</taxon>
        <taxon>Neoptera</taxon>
        <taxon>Endopterygota</taxon>
        <taxon>Diptera</taxon>
        <taxon>Brachycera</taxon>
        <taxon>Muscomorpha</taxon>
        <taxon>Ephydroidea</taxon>
        <taxon>Drosophilidae</taxon>
        <taxon>Drosophila</taxon>
        <taxon>Sophophora</taxon>
    </lineage>
</organism>
<sequence length="610" mass="68312">MAPNLLTIGLLLTLIASGQAHLNIFLNLHEVLRLIGVSAELYYVREGAINDYALNFAVPVPANISDVTFTWQSLVDHPLPYSINIATSDTEVLPRPILNISRIGDVPVEPQTWGIALKCSGTRNAEVTVTINVEVILDRATNNNTNLIFKRKKICLREEQDSAHEEYDDDDLDLLQTARKGHGGDIHYVDRNDEHVVANGHQAPEKQRPVVTESPVGRGNSGGSKRDFDPMLRENLVPPASGLVTLIVGGILALVLVSTLILIAYCAKGPSKRHPSNGVHLIKTSSFQRLPTISSTAHNSIYVCPSTITPTYATLTRPFREYEHEPEEFNRRLQELTVQKCRVRLSCLVQEGNFGRIYRGTYNDCQEVLVKTVAQHASQLQVNLLLQESMMLYEASHPNVLSVLGISIEDYATPFVLYAATGSVRNLKSFLQDPSYARSVTTIQTVLMGSQLAMAMEHLHNHGVIHKDIAARNCVIDDQLRVKLTDSALSRDLFPGDYNSLGDGEYRPIKWLSLEALQKSHYNEGSDVWSFGVLMWEMCTLGKLPYAEIDPYEMEHYLKDGYRLAQPFNCPDELFTIMAYCWASMPAERPSFSQLQICLSEFHTQITRYV</sequence>